<keyword id="KW-1185">Reference proteome</keyword>
<keyword id="KW-0687">Ribonucleoprotein</keyword>
<keyword id="KW-0689">Ribosomal protein</keyword>
<organism>
    <name type="scientific">Bradyrhizobium sp. (strain ORS 278)</name>
    <dbReference type="NCBI Taxonomy" id="114615"/>
    <lineage>
        <taxon>Bacteria</taxon>
        <taxon>Pseudomonadati</taxon>
        <taxon>Pseudomonadota</taxon>
        <taxon>Alphaproteobacteria</taxon>
        <taxon>Hyphomicrobiales</taxon>
        <taxon>Nitrobacteraceae</taxon>
        <taxon>Bradyrhizobium</taxon>
    </lineage>
</organism>
<sequence length="102" mass="11669">MNGQNIRIRLKAFDHRILDTSTREIVNTAKRTGAQVRGPIPLPTRIEKFTVNRSPHVDKKSREQFEMRTHKRLLDIVDPTPQTVDALMKLDLAAGVDVEIKL</sequence>
<protein>
    <recommendedName>
        <fullName evidence="1">Small ribosomal subunit protein uS10</fullName>
    </recommendedName>
    <alternativeName>
        <fullName evidence="2">30S ribosomal protein S10</fullName>
    </alternativeName>
</protein>
<proteinExistence type="inferred from homology"/>
<evidence type="ECO:0000255" key="1">
    <source>
        <dbReference type="HAMAP-Rule" id="MF_00508"/>
    </source>
</evidence>
<evidence type="ECO:0000305" key="2"/>
<reference key="1">
    <citation type="journal article" date="2007" name="Science">
        <title>Legumes symbioses: absence of nod genes in photosynthetic bradyrhizobia.</title>
        <authorList>
            <person name="Giraud E."/>
            <person name="Moulin L."/>
            <person name="Vallenet D."/>
            <person name="Barbe V."/>
            <person name="Cytryn E."/>
            <person name="Avarre J.-C."/>
            <person name="Jaubert M."/>
            <person name="Simon D."/>
            <person name="Cartieaux F."/>
            <person name="Prin Y."/>
            <person name="Bena G."/>
            <person name="Hannibal L."/>
            <person name="Fardoux J."/>
            <person name="Kojadinovic M."/>
            <person name="Vuillet L."/>
            <person name="Lajus A."/>
            <person name="Cruveiller S."/>
            <person name="Rouy Z."/>
            <person name="Mangenot S."/>
            <person name="Segurens B."/>
            <person name="Dossat C."/>
            <person name="Franck W.L."/>
            <person name="Chang W.-S."/>
            <person name="Saunders E."/>
            <person name="Bruce D."/>
            <person name="Richardson P."/>
            <person name="Normand P."/>
            <person name="Dreyfus B."/>
            <person name="Pignol D."/>
            <person name="Stacey G."/>
            <person name="Emerich D."/>
            <person name="Vermeglio A."/>
            <person name="Medigue C."/>
            <person name="Sadowsky M."/>
        </authorList>
    </citation>
    <scope>NUCLEOTIDE SEQUENCE [LARGE SCALE GENOMIC DNA]</scope>
    <source>
        <strain>ORS 278</strain>
    </source>
</reference>
<gene>
    <name evidence="1" type="primary">rpsJ</name>
    <name type="ordered locus">BRADO3065</name>
</gene>
<comment type="function">
    <text evidence="1">Involved in the binding of tRNA to the ribosomes.</text>
</comment>
<comment type="subunit">
    <text evidence="1">Part of the 30S ribosomal subunit.</text>
</comment>
<comment type="similarity">
    <text evidence="1">Belongs to the universal ribosomal protein uS10 family.</text>
</comment>
<name>RS10_BRASO</name>
<accession>A4YSJ1</accession>
<feature type="chain" id="PRO_1000014992" description="Small ribosomal subunit protein uS10">
    <location>
        <begin position="1"/>
        <end position="102"/>
    </location>
</feature>
<dbReference type="EMBL" id="CU234118">
    <property type="protein sequence ID" value="CAL76867.1"/>
    <property type="molecule type" value="Genomic_DNA"/>
</dbReference>
<dbReference type="RefSeq" id="WP_002712302.1">
    <property type="nucleotide sequence ID" value="NC_009445.1"/>
</dbReference>
<dbReference type="SMR" id="A4YSJ1"/>
<dbReference type="STRING" id="114615.BRADO3065"/>
<dbReference type="GeneID" id="93215325"/>
<dbReference type="KEGG" id="bra:BRADO3065"/>
<dbReference type="eggNOG" id="COG0051">
    <property type="taxonomic scope" value="Bacteria"/>
</dbReference>
<dbReference type="HOGENOM" id="CLU_122625_1_3_5"/>
<dbReference type="OrthoDB" id="9804464at2"/>
<dbReference type="Proteomes" id="UP000001994">
    <property type="component" value="Chromosome"/>
</dbReference>
<dbReference type="GO" id="GO:1990904">
    <property type="term" value="C:ribonucleoprotein complex"/>
    <property type="evidence" value="ECO:0007669"/>
    <property type="project" value="UniProtKB-KW"/>
</dbReference>
<dbReference type="GO" id="GO:0005840">
    <property type="term" value="C:ribosome"/>
    <property type="evidence" value="ECO:0007669"/>
    <property type="project" value="UniProtKB-KW"/>
</dbReference>
<dbReference type="GO" id="GO:0003735">
    <property type="term" value="F:structural constituent of ribosome"/>
    <property type="evidence" value="ECO:0007669"/>
    <property type="project" value="InterPro"/>
</dbReference>
<dbReference type="GO" id="GO:0000049">
    <property type="term" value="F:tRNA binding"/>
    <property type="evidence" value="ECO:0007669"/>
    <property type="project" value="UniProtKB-UniRule"/>
</dbReference>
<dbReference type="GO" id="GO:0006412">
    <property type="term" value="P:translation"/>
    <property type="evidence" value="ECO:0007669"/>
    <property type="project" value="UniProtKB-UniRule"/>
</dbReference>
<dbReference type="FunFam" id="3.30.70.600:FF:000001">
    <property type="entry name" value="30S ribosomal protein S10"/>
    <property type="match status" value="1"/>
</dbReference>
<dbReference type="Gene3D" id="3.30.70.600">
    <property type="entry name" value="Ribosomal protein S10 domain"/>
    <property type="match status" value="1"/>
</dbReference>
<dbReference type="HAMAP" id="MF_00508">
    <property type="entry name" value="Ribosomal_uS10"/>
    <property type="match status" value="1"/>
</dbReference>
<dbReference type="InterPro" id="IPR001848">
    <property type="entry name" value="Ribosomal_uS10"/>
</dbReference>
<dbReference type="InterPro" id="IPR018268">
    <property type="entry name" value="Ribosomal_uS10_CS"/>
</dbReference>
<dbReference type="InterPro" id="IPR027486">
    <property type="entry name" value="Ribosomal_uS10_dom"/>
</dbReference>
<dbReference type="InterPro" id="IPR036838">
    <property type="entry name" value="Ribosomal_uS10_dom_sf"/>
</dbReference>
<dbReference type="NCBIfam" id="NF001861">
    <property type="entry name" value="PRK00596.1"/>
    <property type="match status" value="1"/>
</dbReference>
<dbReference type="NCBIfam" id="TIGR01049">
    <property type="entry name" value="rpsJ_bact"/>
    <property type="match status" value="1"/>
</dbReference>
<dbReference type="PANTHER" id="PTHR11700">
    <property type="entry name" value="30S RIBOSOMAL PROTEIN S10 FAMILY MEMBER"/>
    <property type="match status" value="1"/>
</dbReference>
<dbReference type="Pfam" id="PF00338">
    <property type="entry name" value="Ribosomal_S10"/>
    <property type="match status" value="1"/>
</dbReference>
<dbReference type="PRINTS" id="PR00971">
    <property type="entry name" value="RIBOSOMALS10"/>
</dbReference>
<dbReference type="SMART" id="SM01403">
    <property type="entry name" value="Ribosomal_S10"/>
    <property type="match status" value="1"/>
</dbReference>
<dbReference type="SUPFAM" id="SSF54999">
    <property type="entry name" value="Ribosomal protein S10"/>
    <property type="match status" value="1"/>
</dbReference>
<dbReference type="PROSITE" id="PS00361">
    <property type="entry name" value="RIBOSOMAL_S10"/>
    <property type="match status" value="1"/>
</dbReference>